<accession>B0VBE4</accession>
<protein>
    <recommendedName>
        <fullName evidence="1">Multifunctional CCA protein</fullName>
    </recommendedName>
    <domain>
        <recommendedName>
            <fullName evidence="1">CCA-adding enzyme</fullName>
            <ecNumber evidence="1">2.7.7.72</ecNumber>
        </recommendedName>
        <alternativeName>
            <fullName evidence="1">CCA tRNA nucleotidyltransferase</fullName>
        </alternativeName>
        <alternativeName>
            <fullName evidence="1">tRNA CCA-pyrophosphorylase</fullName>
        </alternativeName>
        <alternativeName>
            <fullName evidence="1">tRNA adenylyl-/cytidylyl-transferase</fullName>
        </alternativeName>
        <alternativeName>
            <fullName evidence="1">tRNA nucleotidyltransferase</fullName>
        </alternativeName>
        <alternativeName>
            <fullName evidence="1">tRNA-NT</fullName>
        </alternativeName>
    </domain>
    <domain>
        <recommendedName>
            <fullName evidence="1">2'-nucleotidase</fullName>
            <ecNumber evidence="1">3.1.3.-</ecNumber>
        </recommendedName>
    </domain>
    <domain>
        <recommendedName>
            <fullName evidence="1">2',3'-cyclic phosphodiesterase</fullName>
            <ecNumber evidence="1">3.1.4.-</ecNumber>
        </recommendedName>
    </domain>
    <domain>
        <recommendedName>
            <fullName evidence="1">Phosphatase</fullName>
            <ecNumber evidence="1">3.1.3.-</ecNumber>
        </recommendedName>
    </domain>
</protein>
<gene>
    <name evidence="1" type="primary">cca</name>
    <name type="ordered locus">ABAYE1137</name>
</gene>
<sequence>MQVYLVGGAVRDYLLGHPYQEKDYVVVGATPEHMLAQGFQPVGKDFPVFLHPETKEEYALARTERKSGQGYHGFQFFTDTTVSLEDDLIRRDLTINAIAMDQDGKIYDPYGGQNDLENKILRHVSEAFAEDPLRVLRVARFAARYFPYGFQIAPETLQLMQTMADSGELDALTPERVWKETSRALMENHADIYFQTLRDCGALKHLFPEIDALFGVPQRPEYHPEVDCGIHTLMSLQQACKSNYSLDVRFAVLVHDLGKALTPAEELPRHIMHEERGIKPVTQLCERLRVPTQTKQLALSVCKEHLKCHQIMSLKPGTLWRLLQRLDVLRRPERVEAFVQACECDAKGRLGLEDRPYPQAQYMREAMQIVRSIKVQDLPENIKGAEIGEMLIQYRIEALAEFKNQHQSLSHS</sequence>
<keyword id="KW-0067">ATP-binding</keyword>
<keyword id="KW-0378">Hydrolase</keyword>
<keyword id="KW-0460">Magnesium</keyword>
<keyword id="KW-0479">Metal-binding</keyword>
<keyword id="KW-0511">Multifunctional enzyme</keyword>
<keyword id="KW-0533">Nickel</keyword>
<keyword id="KW-0547">Nucleotide-binding</keyword>
<keyword id="KW-0548">Nucleotidyltransferase</keyword>
<keyword id="KW-0692">RNA repair</keyword>
<keyword id="KW-0694">RNA-binding</keyword>
<keyword id="KW-0808">Transferase</keyword>
<keyword id="KW-0819">tRNA processing</keyword>
<feature type="chain" id="PRO_1000140020" description="Multifunctional CCA protein">
    <location>
        <begin position="1"/>
        <end position="412"/>
    </location>
</feature>
<feature type="domain" description="HD" evidence="1">
    <location>
        <begin position="228"/>
        <end position="329"/>
    </location>
</feature>
<feature type="binding site" evidence="1">
    <location>
        <position position="8"/>
    </location>
    <ligand>
        <name>ATP</name>
        <dbReference type="ChEBI" id="CHEBI:30616"/>
    </ligand>
</feature>
<feature type="binding site" evidence="1">
    <location>
        <position position="8"/>
    </location>
    <ligand>
        <name>CTP</name>
        <dbReference type="ChEBI" id="CHEBI:37563"/>
    </ligand>
</feature>
<feature type="binding site" evidence="1">
    <location>
        <position position="11"/>
    </location>
    <ligand>
        <name>ATP</name>
        <dbReference type="ChEBI" id="CHEBI:30616"/>
    </ligand>
</feature>
<feature type="binding site" evidence="1">
    <location>
        <position position="11"/>
    </location>
    <ligand>
        <name>CTP</name>
        <dbReference type="ChEBI" id="CHEBI:37563"/>
    </ligand>
</feature>
<feature type="binding site" evidence="1">
    <location>
        <position position="21"/>
    </location>
    <ligand>
        <name>Mg(2+)</name>
        <dbReference type="ChEBI" id="CHEBI:18420"/>
    </ligand>
</feature>
<feature type="binding site" evidence="1">
    <location>
        <position position="23"/>
    </location>
    <ligand>
        <name>Mg(2+)</name>
        <dbReference type="ChEBI" id="CHEBI:18420"/>
    </ligand>
</feature>
<feature type="binding site" evidence="1">
    <location>
        <position position="91"/>
    </location>
    <ligand>
        <name>ATP</name>
        <dbReference type="ChEBI" id="CHEBI:30616"/>
    </ligand>
</feature>
<feature type="binding site" evidence="1">
    <location>
        <position position="91"/>
    </location>
    <ligand>
        <name>CTP</name>
        <dbReference type="ChEBI" id="CHEBI:37563"/>
    </ligand>
</feature>
<feature type="binding site" evidence="1">
    <location>
        <position position="137"/>
    </location>
    <ligand>
        <name>ATP</name>
        <dbReference type="ChEBI" id="CHEBI:30616"/>
    </ligand>
</feature>
<feature type="binding site" evidence="1">
    <location>
        <position position="137"/>
    </location>
    <ligand>
        <name>CTP</name>
        <dbReference type="ChEBI" id="CHEBI:37563"/>
    </ligand>
</feature>
<feature type="binding site" evidence="1">
    <location>
        <position position="140"/>
    </location>
    <ligand>
        <name>ATP</name>
        <dbReference type="ChEBI" id="CHEBI:30616"/>
    </ligand>
</feature>
<feature type="binding site" evidence="1">
    <location>
        <position position="140"/>
    </location>
    <ligand>
        <name>CTP</name>
        <dbReference type="ChEBI" id="CHEBI:37563"/>
    </ligand>
</feature>
<reference key="1">
    <citation type="journal article" date="2008" name="PLoS ONE">
        <title>Comparative analysis of Acinetobacters: three genomes for three lifestyles.</title>
        <authorList>
            <person name="Vallenet D."/>
            <person name="Nordmann P."/>
            <person name="Barbe V."/>
            <person name="Poirel L."/>
            <person name="Mangenot S."/>
            <person name="Bataille E."/>
            <person name="Dossat C."/>
            <person name="Gas S."/>
            <person name="Kreimeyer A."/>
            <person name="Lenoble P."/>
            <person name="Oztas S."/>
            <person name="Poulain J."/>
            <person name="Segurens B."/>
            <person name="Robert C."/>
            <person name="Abergel C."/>
            <person name="Claverie J.-M."/>
            <person name="Raoult D."/>
            <person name="Medigue C."/>
            <person name="Weissenbach J."/>
            <person name="Cruveiller S."/>
        </authorList>
    </citation>
    <scope>NUCLEOTIDE SEQUENCE [LARGE SCALE GENOMIC DNA]</scope>
    <source>
        <strain>AYE</strain>
    </source>
</reference>
<dbReference type="EC" id="2.7.7.72" evidence="1"/>
<dbReference type="EC" id="3.1.3.-" evidence="1"/>
<dbReference type="EC" id="3.1.4.-" evidence="1"/>
<dbReference type="EMBL" id="CU459141">
    <property type="protein sequence ID" value="CAM86064.1"/>
    <property type="molecule type" value="Genomic_DNA"/>
</dbReference>
<dbReference type="RefSeq" id="WP_001198539.1">
    <property type="nucleotide sequence ID" value="NZ_JBDGFB010000005.1"/>
</dbReference>
<dbReference type="SMR" id="B0VBE4"/>
<dbReference type="EnsemblBacteria" id="CAM86064">
    <property type="protein sequence ID" value="CAM86064"/>
    <property type="gene ID" value="ABAYE1137"/>
</dbReference>
<dbReference type="KEGG" id="aby:ABAYE1137"/>
<dbReference type="HOGENOM" id="CLU_015961_1_1_6"/>
<dbReference type="GO" id="GO:0005524">
    <property type="term" value="F:ATP binding"/>
    <property type="evidence" value="ECO:0007669"/>
    <property type="project" value="UniProtKB-UniRule"/>
</dbReference>
<dbReference type="GO" id="GO:0004810">
    <property type="term" value="F:CCA tRNA nucleotidyltransferase activity"/>
    <property type="evidence" value="ECO:0007669"/>
    <property type="project" value="UniProtKB-UniRule"/>
</dbReference>
<dbReference type="GO" id="GO:0004112">
    <property type="term" value="F:cyclic-nucleotide phosphodiesterase activity"/>
    <property type="evidence" value="ECO:0007669"/>
    <property type="project" value="UniProtKB-UniRule"/>
</dbReference>
<dbReference type="GO" id="GO:0000287">
    <property type="term" value="F:magnesium ion binding"/>
    <property type="evidence" value="ECO:0007669"/>
    <property type="project" value="UniProtKB-UniRule"/>
</dbReference>
<dbReference type="GO" id="GO:0016791">
    <property type="term" value="F:phosphatase activity"/>
    <property type="evidence" value="ECO:0007669"/>
    <property type="project" value="UniProtKB-UniRule"/>
</dbReference>
<dbReference type="GO" id="GO:0000049">
    <property type="term" value="F:tRNA binding"/>
    <property type="evidence" value="ECO:0007669"/>
    <property type="project" value="UniProtKB-UniRule"/>
</dbReference>
<dbReference type="GO" id="GO:0042245">
    <property type="term" value="P:RNA repair"/>
    <property type="evidence" value="ECO:0007669"/>
    <property type="project" value="UniProtKB-KW"/>
</dbReference>
<dbReference type="GO" id="GO:0001680">
    <property type="term" value="P:tRNA 3'-terminal CCA addition"/>
    <property type="evidence" value="ECO:0007669"/>
    <property type="project" value="UniProtKB-UniRule"/>
</dbReference>
<dbReference type="CDD" id="cd00077">
    <property type="entry name" value="HDc"/>
    <property type="match status" value="1"/>
</dbReference>
<dbReference type="CDD" id="cd05398">
    <property type="entry name" value="NT_ClassII-CCAase"/>
    <property type="match status" value="1"/>
</dbReference>
<dbReference type="Gene3D" id="3.30.460.10">
    <property type="entry name" value="Beta Polymerase, domain 2"/>
    <property type="match status" value="1"/>
</dbReference>
<dbReference type="Gene3D" id="1.10.3090.10">
    <property type="entry name" value="cca-adding enzyme, domain 2"/>
    <property type="match status" value="1"/>
</dbReference>
<dbReference type="HAMAP" id="MF_01261">
    <property type="entry name" value="CCA_bact_type1"/>
    <property type="match status" value="1"/>
</dbReference>
<dbReference type="HAMAP" id="MF_01262">
    <property type="entry name" value="CCA_bact_type2"/>
    <property type="match status" value="1"/>
</dbReference>
<dbReference type="InterPro" id="IPR012006">
    <property type="entry name" value="CCA_bact"/>
</dbReference>
<dbReference type="InterPro" id="IPR003607">
    <property type="entry name" value="HD/PDEase_dom"/>
</dbReference>
<dbReference type="InterPro" id="IPR006674">
    <property type="entry name" value="HD_domain"/>
</dbReference>
<dbReference type="InterPro" id="IPR043519">
    <property type="entry name" value="NT_sf"/>
</dbReference>
<dbReference type="InterPro" id="IPR002646">
    <property type="entry name" value="PolA_pol_head_dom"/>
</dbReference>
<dbReference type="InterPro" id="IPR032828">
    <property type="entry name" value="PolyA_RNA-bd"/>
</dbReference>
<dbReference type="InterPro" id="IPR050124">
    <property type="entry name" value="tRNA_CCA-adding_enzyme"/>
</dbReference>
<dbReference type="NCBIfam" id="NF008137">
    <property type="entry name" value="PRK10885.1"/>
    <property type="match status" value="1"/>
</dbReference>
<dbReference type="PANTHER" id="PTHR47545">
    <property type="entry name" value="MULTIFUNCTIONAL CCA PROTEIN"/>
    <property type="match status" value="1"/>
</dbReference>
<dbReference type="PANTHER" id="PTHR47545:SF1">
    <property type="entry name" value="MULTIFUNCTIONAL CCA PROTEIN"/>
    <property type="match status" value="1"/>
</dbReference>
<dbReference type="Pfam" id="PF01966">
    <property type="entry name" value="HD"/>
    <property type="match status" value="1"/>
</dbReference>
<dbReference type="Pfam" id="PF01743">
    <property type="entry name" value="PolyA_pol"/>
    <property type="match status" value="1"/>
</dbReference>
<dbReference type="Pfam" id="PF12627">
    <property type="entry name" value="PolyA_pol_RNAbd"/>
    <property type="match status" value="1"/>
</dbReference>
<dbReference type="PIRSF" id="PIRSF000813">
    <property type="entry name" value="CCA_bact"/>
    <property type="match status" value="1"/>
</dbReference>
<dbReference type="SUPFAM" id="SSF81301">
    <property type="entry name" value="Nucleotidyltransferase"/>
    <property type="match status" value="1"/>
</dbReference>
<dbReference type="SUPFAM" id="SSF81891">
    <property type="entry name" value="Poly A polymerase C-terminal region-like"/>
    <property type="match status" value="1"/>
</dbReference>
<dbReference type="PROSITE" id="PS51831">
    <property type="entry name" value="HD"/>
    <property type="match status" value="1"/>
</dbReference>
<name>CCA_ACIBY</name>
<proteinExistence type="inferred from homology"/>
<organism>
    <name type="scientific">Acinetobacter baumannii (strain AYE)</name>
    <dbReference type="NCBI Taxonomy" id="509173"/>
    <lineage>
        <taxon>Bacteria</taxon>
        <taxon>Pseudomonadati</taxon>
        <taxon>Pseudomonadota</taxon>
        <taxon>Gammaproteobacteria</taxon>
        <taxon>Moraxellales</taxon>
        <taxon>Moraxellaceae</taxon>
        <taxon>Acinetobacter</taxon>
        <taxon>Acinetobacter calcoaceticus/baumannii complex</taxon>
    </lineage>
</organism>
<evidence type="ECO:0000255" key="1">
    <source>
        <dbReference type="HAMAP-Rule" id="MF_01261"/>
    </source>
</evidence>
<comment type="function">
    <text evidence="1">Catalyzes the addition and repair of the essential 3'-terminal CCA sequence in tRNAs without using a nucleic acid template. Adds these three nucleotides in the order of C, C, and A to the tRNA nucleotide-73, using CTP and ATP as substrates and producing inorganic pyrophosphate. tRNA 3'-terminal CCA addition is required both for tRNA processing and repair. Also involved in tRNA surveillance by mediating tandem CCA addition to generate a CCACCA at the 3' terminus of unstable tRNAs. While stable tRNAs receive only 3'-terminal CCA, unstable tRNAs are marked with CCACCA and rapidly degraded.</text>
</comment>
<comment type="catalytic activity">
    <reaction evidence="1">
        <text>a tRNA precursor + 2 CTP + ATP = a tRNA with a 3' CCA end + 3 diphosphate</text>
        <dbReference type="Rhea" id="RHEA:14433"/>
        <dbReference type="Rhea" id="RHEA-COMP:10465"/>
        <dbReference type="Rhea" id="RHEA-COMP:10468"/>
        <dbReference type="ChEBI" id="CHEBI:30616"/>
        <dbReference type="ChEBI" id="CHEBI:33019"/>
        <dbReference type="ChEBI" id="CHEBI:37563"/>
        <dbReference type="ChEBI" id="CHEBI:74896"/>
        <dbReference type="ChEBI" id="CHEBI:83071"/>
        <dbReference type="EC" id="2.7.7.72"/>
    </reaction>
</comment>
<comment type="catalytic activity">
    <reaction evidence="1">
        <text>a tRNA with a 3' CCA end + 2 CTP + ATP = a tRNA with a 3' CCACCA end + 3 diphosphate</text>
        <dbReference type="Rhea" id="RHEA:76235"/>
        <dbReference type="Rhea" id="RHEA-COMP:10468"/>
        <dbReference type="Rhea" id="RHEA-COMP:18655"/>
        <dbReference type="ChEBI" id="CHEBI:30616"/>
        <dbReference type="ChEBI" id="CHEBI:33019"/>
        <dbReference type="ChEBI" id="CHEBI:37563"/>
        <dbReference type="ChEBI" id="CHEBI:83071"/>
        <dbReference type="ChEBI" id="CHEBI:195187"/>
    </reaction>
    <physiologicalReaction direction="left-to-right" evidence="1">
        <dbReference type="Rhea" id="RHEA:76236"/>
    </physiologicalReaction>
</comment>
<comment type="cofactor">
    <cofactor evidence="1">
        <name>Mg(2+)</name>
        <dbReference type="ChEBI" id="CHEBI:18420"/>
    </cofactor>
    <text evidence="1">Magnesium is required for nucleotidyltransferase activity.</text>
</comment>
<comment type="cofactor">
    <cofactor evidence="1">
        <name>Ni(2+)</name>
        <dbReference type="ChEBI" id="CHEBI:49786"/>
    </cofactor>
    <text evidence="1">Nickel for phosphatase activity.</text>
</comment>
<comment type="subunit">
    <text evidence="1">Monomer. Can also form homodimers and oligomers.</text>
</comment>
<comment type="domain">
    <text evidence="1">Comprises two domains: an N-terminal domain containing the nucleotidyltransferase activity and a C-terminal HD domain associated with both phosphodiesterase and phosphatase activities.</text>
</comment>
<comment type="miscellaneous">
    <text evidence="1">A single active site specifically recognizes both ATP and CTP and is responsible for their addition.</text>
</comment>
<comment type="similarity">
    <text evidence="1">Belongs to the tRNA nucleotidyltransferase/poly(A) polymerase family. Bacterial CCA-adding enzyme type 1 subfamily.</text>
</comment>